<feature type="chain" id="PRO_0000091390" description="Elongation factor Tu">
    <location>
        <begin position="1"/>
        <end position="394"/>
    </location>
</feature>
<feature type="domain" description="tr-type G">
    <location>
        <begin position="10"/>
        <end position="204"/>
    </location>
</feature>
<feature type="region of interest" description="G1" evidence="1">
    <location>
        <begin position="19"/>
        <end position="26"/>
    </location>
</feature>
<feature type="region of interest" description="G2" evidence="1">
    <location>
        <begin position="60"/>
        <end position="64"/>
    </location>
</feature>
<feature type="region of interest" description="G3" evidence="1">
    <location>
        <begin position="81"/>
        <end position="84"/>
    </location>
</feature>
<feature type="region of interest" description="G4" evidence="1">
    <location>
        <begin position="136"/>
        <end position="139"/>
    </location>
</feature>
<feature type="region of interest" description="G5" evidence="1">
    <location>
        <begin position="174"/>
        <end position="176"/>
    </location>
</feature>
<feature type="binding site" evidence="2">
    <location>
        <begin position="19"/>
        <end position="26"/>
    </location>
    <ligand>
        <name>GTP</name>
        <dbReference type="ChEBI" id="CHEBI:37565"/>
    </ligand>
</feature>
<feature type="binding site" evidence="2">
    <location>
        <position position="26"/>
    </location>
    <ligand>
        <name>Mg(2+)</name>
        <dbReference type="ChEBI" id="CHEBI:18420"/>
    </ligand>
</feature>
<feature type="binding site" evidence="2">
    <location>
        <begin position="81"/>
        <end position="85"/>
    </location>
    <ligand>
        <name>GTP</name>
        <dbReference type="ChEBI" id="CHEBI:37565"/>
    </ligand>
</feature>
<feature type="binding site" evidence="2">
    <location>
        <begin position="136"/>
        <end position="139"/>
    </location>
    <ligand>
        <name>GTP</name>
        <dbReference type="ChEBI" id="CHEBI:37565"/>
    </ligand>
</feature>
<accession>P64028</accession>
<accession>Q99W61</accession>
<sequence length="394" mass="43104">MAKEKFDRSKEHANIGTIGHVDHGKTTLTAAIATVLAKNGDSVAQSYDMIDNAPEEKERGITINTSHIEYQTDKRHYAHVDCPGHADYVKNMITGAAQMDGGILVVSAADGPMPQTREHILLSRNVGVPALVVFLNKVDMVDDEELLELVEMEVRDLLSEYDFPGDDVPVIAGSALKALEGDAQYEEKILELMEAVDTYIPTPERDSDKPFMMPVEDVFSITGRGTVATGRVERGQIKVGEEVEIIGLHDTSKTTVTGVEMFRKLLDYAEAGDNIGALLRGVAREDVQRGQVLAAPGSITPHTEFKAEVYVLSKDEGGRHTPFFSNYRPQFYFRTTDVTGVVHLPEGTEMVMPGDNVEMTVELIAPIAIEDGTRFSIREGGRTVGSGVVTEIIK</sequence>
<reference key="1">
    <citation type="journal article" date="2001" name="Lancet">
        <title>Whole genome sequencing of meticillin-resistant Staphylococcus aureus.</title>
        <authorList>
            <person name="Kuroda M."/>
            <person name="Ohta T."/>
            <person name="Uchiyama I."/>
            <person name="Baba T."/>
            <person name="Yuzawa H."/>
            <person name="Kobayashi I."/>
            <person name="Cui L."/>
            <person name="Oguchi A."/>
            <person name="Aoki K."/>
            <person name="Nagai Y."/>
            <person name="Lian J.-Q."/>
            <person name="Ito T."/>
            <person name="Kanamori M."/>
            <person name="Matsumaru H."/>
            <person name="Maruyama A."/>
            <person name="Murakami H."/>
            <person name="Hosoyama A."/>
            <person name="Mizutani-Ui Y."/>
            <person name="Takahashi N.K."/>
            <person name="Sawano T."/>
            <person name="Inoue R."/>
            <person name="Kaito C."/>
            <person name="Sekimizu K."/>
            <person name="Hirakawa H."/>
            <person name="Kuhara S."/>
            <person name="Goto S."/>
            <person name="Yabuzaki J."/>
            <person name="Kanehisa M."/>
            <person name="Yamashita A."/>
            <person name="Oshima K."/>
            <person name="Furuya K."/>
            <person name="Yoshino C."/>
            <person name="Shiba T."/>
            <person name="Hattori M."/>
            <person name="Ogasawara N."/>
            <person name="Hayashi H."/>
            <person name="Hiramatsu K."/>
        </authorList>
    </citation>
    <scope>NUCLEOTIDE SEQUENCE [LARGE SCALE GENOMIC DNA]</scope>
    <source>
        <strain>Mu50 / ATCC 700699</strain>
    </source>
</reference>
<dbReference type="EC" id="3.6.5.3" evidence="2"/>
<dbReference type="EMBL" id="BA000017">
    <property type="protein sequence ID" value="BAB56710.1"/>
    <property type="molecule type" value="Genomic_DNA"/>
</dbReference>
<dbReference type="RefSeq" id="WP_001040568.1">
    <property type="nucleotide sequence ID" value="NC_002758.2"/>
</dbReference>
<dbReference type="SMR" id="P64028"/>
<dbReference type="KEGG" id="sav:SAV0548"/>
<dbReference type="HOGENOM" id="CLU_007265_0_0_9"/>
<dbReference type="PhylomeDB" id="P64028"/>
<dbReference type="Proteomes" id="UP000002481">
    <property type="component" value="Chromosome"/>
</dbReference>
<dbReference type="GO" id="GO:0005829">
    <property type="term" value="C:cytosol"/>
    <property type="evidence" value="ECO:0007669"/>
    <property type="project" value="TreeGrafter"/>
</dbReference>
<dbReference type="GO" id="GO:0005525">
    <property type="term" value="F:GTP binding"/>
    <property type="evidence" value="ECO:0007669"/>
    <property type="project" value="UniProtKB-UniRule"/>
</dbReference>
<dbReference type="GO" id="GO:0003924">
    <property type="term" value="F:GTPase activity"/>
    <property type="evidence" value="ECO:0007669"/>
    <property type="project" value="InterPro"/>
</dbReference>
<dbReference type="GO" id="GO:0003746">
    <property type="term" value="F:translation elongation factor activity"/>
    <property type="evidence" value="ECO:0007669"/>
    <property type="project" value="UniProtKB-UniRule"/>
</dbReference>
<dbReference type="CDD" id="cd01884">
    <property type="entry name" value="EF_Tu"/>
    <property type="match status" value="1"/>
</dbReference>
<dbReference type="CDD" id="cd03697">
    <property type="entry name" value="EFTU_II"/>
    <property type="match status" value="1"/>
</dbReference>
<dbReference type="CDD" id="cd03707">
    <property type="entry name" value="EFTU_III"/>
    <property type="match status" value="1"/>
</dbReference>
<dbReference type="FunFam" id="2.40.30.10:FF:000001">
    <property type="entry name" value="Elongation factor Tu"/>
    <property type="match status" value="1"/>
</dbReference>
<dbReference type="FunFam" id="3.40.50.300:FF:000003">
    <property type="entry name" value="Elongation factor Tu"/>
    <property type="match status" value="1"/>
</dbReference>
<dbReference type="Gene3D" id="3.40.50.300">
    <property type="entry name" value="P-loop containing nucleotide triphosphate hydrolases"/>
    <property type="match status" value="1"/>
</dbReference>
<dbReference type="Gene3D" id="2.40.30.10">
    <property type="entry name" value="Translation factors"/>
    <property type="match status" value="2"/>
</dbReference>
<dbReference type="HAMAP" id="MF_00118_B">
    <property type="entry name" value="EF_Tu_B"/>
    <property type="match status" value="1"/>
</dbReference>
<dbReference type="InterPro" id="IPR041709">
    <property type="entry name" value="EF-Tu_GTP-bd"/>
</dbReference>
<dbReference type="InterPro" id="IPR050055">
    <property type="entry name" value="EF-Tu_GTPase"/>
</dbReference>
<dbReference type="InterPro" id="IPR004161">
    <property type="entry name" value="EFTu-like_2"/>
</dbReference>
<dbReference type="InterPro" id="IPR033720">
    <property type="entry name" value="EFTU_2"/>
</dbReference>
<dbReference type="InterPro" id="IPR031157">
    <property type="entry name" value="G_TR_CS"/>
</dbReference>
<dbReference type="InterPro" id="IPR027417">
    <property type="entry name" value="P-loop_NTPase"/>
</dbReference>
<dbReference type="InterPro" id="IPR005225">
    <property type="entry name" value="Small_GTP-bd"/>
</dbReference>
<dbReference type="InterPro" id="IPR000795">
    <property type="entry name" value="T_Tr_GTP-bd_dom"/>
</dbReference>
<dbReference type="InterPro" id="IPR009000">
    <property type="entry name" value="Transl_B-barrel_sf"/>
</dbReference>
<dbReference type="InterPro" id="IPR009001">
    <property type="entry name" value="Transl_elong_EF1A/Init_IF2_C"/>
</dbReference>
<dbReference type="InterPro" id="IPR004541">
    <property type="entry name" value="Transl_elong_EFTu/EF1A_bac/org"/>
</dbReference>
<dbReference type="InterPro" id="IPR004160">
    <property type="entry name" value="Transl_elong_EFTu/EF1A_C"/>
</dbReference>
<dbReference type="NCBIfam" id="TIGR00485">
    <property type="entry name" value="EF-Tu"/>
    <property type="match status" value="1"/>
</dbReference>
<dbReference type="NCBIfam" id="NF000766">
    <property type="entry name" value="PRK00049.1"/>
    <property type="match status" value="1"/>
</dbReference>
<dbReference type="NCBIfam" id="NF009372">
    <property type="entry name" value="PRK12735.1"/>
    <property type="match status" value="1"/>
</dbReference>
<dbReference type="NCBIfam" id="NF009373">
    <property type="entry name" value="PRK12736.1"/>
    <property type="match status" value="1"/>
</dbReference>
<dbReference type="NCBIfam" id="TIGR00231">
    <property type="entry name" value="small_GTP"/>
    <property type="match status" value="1"/>
</dbReference>
<dbReference type="PANTHER" id="PTHR43721:SF22">
    <property type="entry name" value="ELONGATION FACTOR TU, MITOCHONDRIAL"/>
    <property type="match status" value="1"/>
</dbReference>
<dbReference type="PANTHER" id="PTHR43721">
    <property type="entry name" value="ELONGATION FACTOR TU-RELATED"/>
    <property type="match status" value="1"/>
</dbReference>
<dbReference type="Pfam" id="PF00009">
    <property type="entry name" value="GTP_EFTU"/>
    <property type="match status" value="1"/>
</dbReference>
<dbReference type="Pfam" id="PF03144">
    <property type="entry name" value="GTP_EFTU_D2"/>
    <property type="match status" value="1"/>
</dbReference>
<dbReference type="Pfam" id="PF03143">
    <property type="entry name" value="GTP_EFTU_D3"/>
    <property type="match status" value="1"/>
</dbReference>
<dbReference type="PRINTS" id="PR00315">
    <property type="entry name" value="ELONGATNFCT"/>
</dbReference>
<dbReference type="SUPFAM" id="SSF50465">
    <property type="entry name" value="EF-Tu/eEF-1alpha/eIF2-gamma C-terminal domain"/>
    <property type="match status" value="1"/>
</dbReference>
<dbReference type="SUPFAM" id="SSF52540">
    <property type="entry name" value="P-loop containing nucleoside triphosphate hydrolases"/>
    <property type="match status" value="1"/>
</dbReference>
<dbReference type="SUPFAM" id="SSF50447">
    <property type="entry name" value="Translation proteins"/>
    <property type="match status" value="1"/>
</dbReference>
<dbReference type="PROSITE" id="PS00301">
    <property type="entry name" value="G_TR_1"/>
    <property type="match status" value="1"/>
</dbReference>
<dbReference type="PROSITE" id="PS51722">
    <property type="entry name" value="G_TR_2"/>
    <property type="match status" value="1"/>
</dbReference>
<gene>
    <name evidence="2" type="primary">tuf</name>
    <name type="synonym">tufA</name>
    <name type="ordered locus">SAV0548</name>
</gene>
<proteinExistence type="inferred from homology"/>
<name>EFTU_STAAM</name>
<evidence type="ECO:0000250" key="1"/>
<evidence type="ECO:0000255" key="2">
    <source>
        <dbReference type="HAMAP-Rule" id="MF_00118"/>
    </source>
</evidence>
<organism>
    <name type="scientific">Staphylococcus aureus (strain Mu50 / ATCC 700699)</name>
    <dbReference type="NCBI Taxonomy" id="158878"/>
    <lineage>
        <taxon>Bacteria</taxon>
        <taxon>Bacillati</taxon>
        <taxon>Bacillota</taxon>
        <taxon>Bacilli</taxon>
        <taxon>Bacillales</taxon>
        <taxon>Staphylococcaceae</taxon>
        <taxon>Staphylococcus</taxon>
    </lineage>
</organism>
<protein>
    <recommendedName>
        <fullName evidence="2">Elongation factor Tu</fullName>
        <shortName evidence="2">EF-Tu</shortName>
        <ecNumber evidence="2">3.6.5.3</ecNumber>
    </recommendedName>
</protein>
<comment type="function">
    <text evidence="2">GTP hydrolase that promotes the GTP-dependent binding of aminoacyl-tRNA to the A-site of ribosomes during protein biosynthesis.</text>
</comment>
<comment type="catalytic activity">
    <reaction evidence="2">
        <text>GTP + H2O = GDP + phosphate + H(+)</text>
        <dbReference type="Rhea" id="RHEA:19669"/>
        <dbReference type="ChEBI" id="CHEBI:15377"/>
        <dbReference type="ChEBI" id="CHEBI:15378"/>
        <dbReference type="ChEBI" id="CHEBI:37565"/>
        <dbReference type="ChEBI" id="CHEBI:43474"/>
        <dbReference type="ChEBI" id="CHEBI:58189"/>
        <dbReference type="EC" id="3.6.5.3"/>
    </reaction>
    <physiologicalReaction direction="left-to-right" evidence="2">
        <dbReference type="Rhea" id="RHEA:19670"/>
    </physiologicalReaction>
</comment>
<comment type="subunit">
    <text evidence="2">Monomer.</text>
</comment>
<comment type="subcellular location">
    <subcellularLocation>
        <location evidence="2">Cytoplasm</location>
    </subcellularLocation>
</comment>
<comment type="similarity">
    <text evidence="2">Belongs to the TRAFAC class translation factor GTPase superfamily. Classic translation factor GTPase family. EF-Tu/EF-1A subfamily.</text>
</comment>
<keyword id="KW-0963">Cytoplasm</keyword>
<keyword id="KW-0251">Elongation factor</keyword>
<keyword id="KW-0342">GTP-binding</keyword>
<keyword id="KW-0378">Hydrolase</keyword>
<keyword id="KW-0460">Magnesium</keyword>
<keyword id="KW-0479">Metal-binding</keyword>
<keyword id="KW-0547">Nucleotide-binding</keyword>
<keyword id="KW-0648">Protein biosynthesis</keyword>